<sequence>MASNIFSRIKSPSGGSQSFYQQLRSGEDPEYDPGLDEENLGHRFDDFQAEGMDIGDSSMTVESVAPGSKGKGKATFRPTAHARSSGITSPRWQQDDDGDNEVPASLLMEPKDLDPPASPPNKRATNPGSSRTPASVGPSSARTRAQWEAATAQQQLHQDHPYTTPMGPQPIPVARGTMSNNPREKALWRWVNTSNLDSFMRDVYDYFEGGGLWCILCANALWLFQCIDYSRVPDSRSLHEVIVPQCTRKMSGLWNFAIWLYTFFFIWKCVQYFVEIRRLTYIRDFYIYLLDIPEQDMQTISWQDVVARIMALREENPKTATNISPRLRQFMGSQSKERLDALDIANRLMRKENYLIAMINKDILDLSLPVPFLRGRQMFSKTMEWYLQYCILDMAFNELGQVQQDFLRPDRRRLLSQKLRQRFLFAGFLNLLFAPVVLAYVVIVYFFTYYYEYQKDPKQAAARKYTSLAEWKFRQFNELPHIFYERLHMSYPFATRYIDQFPKRITEAVARTIAFMSGAITAILAIGSVLDSELFLNFEITKDRPVIFYLGVFAAIWATTRGMVSEETLVFNPEYALRNVIEYTRYVPDHWKNKLHSSEVKQEFSELYKMKVVIFLEEMMGIVTTPMLLLFSLPRCSDQIVDFFREFTIHVDGLGYVCSFAVFDFQKGPGNTGPQGPRPDVREDYYSTKHGKMAASYYGFLDNYAANPKTGIPGHLPPGPKPSFHPPPSFPGIGSPTLAADMQGSHIGRTGTETGRARSRAPGGRGPRIGVMPQPSPMASMLLDQHHQPPGGNMVARSLHASRYPRGYRGESQIIEETEASSIRRNGEDDELYEPGGALGESVWETSPARGVTRENSAANTEDPEAGVLGLIYQLQQTQRPRRGGGMV</sequence>
<dbReference type="EMBL" id="HG970335">
    <property type="protein sequence ID" value="SCB65354.1"/>
    <property type="status" value="ALT_SEQ"/>
    <property type="molecule type" value="Genomic_DNA"/>
</dbReference>
<dbReference type="RefSeq" id="XP_011327831.1">
    <property type="nucleotide sequence ID" value="XM_011329529.1"/>
</dbReference>
<dbReference type="SMR" id="I1S9X9"/>
<dbReference type="STRING" id="229533.I1S9X9"/>
<dbReference type="KEGG" id="fgr:FGSG_13660"/>
<dbReference type="eggNOG" id="KOG2173">
    <property type="taxonomic scope" value="Eukaryota"/>
</dbReference>
<dbReference type="HOGENOM" id="CLU_006200_1_1_1"/>
<dbReference type="InParanoid" id="I1S9X9"/>
<dbReference type="OrthoDB" id="90924at110618"/>
<dbReference type="PHI-base" id="PHI:8263"/>
<dbReference type="Proteomes" id="UP000070720">
    <property type="component" value="Chromosome 4"/>
</dbReference>
<dbReference type="GO" id="GO:0000421">
    <property type="term" value="C:autophagosome membrane"/>
    <property type="evidence" value="ECO:0000269"/>
    <property type="project" value="PHI-base"/>
</dbReference>
<dbReference type="GO" id="GO:0030659">
    <property type="term" value="C:cytoplasmic vesicle membrane"/>
    <property type="evidence" value="ECO:0007669"/>
    <property type="project" value="UniProtKB-SubCell"/>
</dbReference>
<dbReference type="GO" id="GO:0005789">
    <property type="term" value="C:endoplasmic reticulum membrane"/>
    <property type="evidence" value="ECO:0007669"/>
    <property type="project" value="UniProtKB-SubCell"/>
</dbReference>
<dbReference type="GO" id="GO:0000139">
    <property type="term" value="C:Golgi membrane"/>
    <property type="evidence" value="ECO:0007669"/>
    <property type="project" value="UniProtKB-SubCell"/>
</dbReference>
<dbReference type="GO" id="GO:0034045">
    <property type="term" value="C:phagophore assembly site membrane"/>
    <property type="evidence" value="ECO:0007669"/>
    <property type="project" value="UniProtKB-SubCell"/>
</dbReference>
<dbReference type="GO" id="GO:0005774">
    <property type="term" value="C:vacuolar membrane"/>
    <property type="evidence" value="ECO:0000269"/>
    <property type="project" value="PHI-base"/>
</dbReference>
<dbReference type="GO" id="GO:0005085">
    <property type="term" value="F:guanyl-nucleotide exchange factor activity"/>
    <property type="evidence" value="ECO:0000353"/>
    <property type="project" value="PHI-base"/>
</dbReference>
<dbReference type="GO" id="GO:0000422">
    <property type="term" value="P:autophagy of mitochondrion"/>
    <property type="evidence" value="ECO:0007669"/>
    <property type="project" value="TreeGrafter"/>
</dbReference>
<dbReference type="GO" id="GO:1905691">
    <property type="term" value="P:lipid droplet disassembly"/>
    <property type="evidence" value="ECO:0000315"/>
    <property type="project" value="PHI-base"/>
</dbReference>
<dbReference type="GO" id="GO:0006869">
    <property type="term" value="P:lipid transport"/>
    <property type="evidence" value="ECO:0007669"/>
    <property type="project" value="UniProtKB-KW"/>
</dbReference>
<dbReference type="GO" id="GO:0016236">
    <property type="term" value="P:macroautophagy"/>
    <property type="evidence" value="ECO:0000315"/>
    <property type="project" value="PHI-base"/>
</dbReference>
<dbReference type="GO" id="GO:0034727">
    <property type="term" value="P:piecemeal microautophagy of the nucleus"/>
    <property type="evidence" value="ECO:0007669"/>
    <property type="project" value="TreeGrafter"/>
</dbReference>
<dbReference type="GO" id="GO:0034497">
    <property type="term" value="P:protein localization to phagophore assembly site"/>
    <property type="evidence" value="ECO:0007669"/>
    <property type="project" value="TreeGrafter"/>
</dbReference>
<dbReference type="GO" id="GO:0061709">
    <property type="term" value="P:reticulophagy"/>
    <property type="evidence" value="ECO:0007669"/>
    <property type="project" value="TreeGrafter"/>
</dbReference>
<dbReference type="InterPro" id="IPR007241">
    <property type="entry name" value="Autophagy-rel_prot_9"/>
</dbReference>
<dbReference type="PANTHER" id="PTHR13038">
    <property type="entry name" value="APG9 AUTOPHAGY 9"/>
    <property type="match status" value="1"/>
</dbReference>
<dbReference type="PANTHER" id="PTHR13038:SF10">
    <property type="entry name" value="AUTOPHAGY-RELATED PROTEIN 9"/>
    <property type="match status" value="1"/>
</dbReference>
<dbReference type="Pfam" id="PF04109">
    <property type="entry name" value="ATG9"/>
    <property type="match status" value="1"/>
</dbReference>
<protein>
    <recommendedName>
        <fullName evidence="7">Autophagy-related protein 9</fullName>
    </recommendedName>
</protein>
<evidence type="ECO:0000250" key="1">
    <source>
        <dbReference type="UniProtKB" id="O74312"/>
    </source>
</evidence>
<evidence type="ECO:0000250" key="2">
    <source>
        <dbReference type="UniProtKB" id="Q12142"/>
    </source>
</evidence>
<evidence type="ECO:0000255" key="3"/>
<evidence type="ECO:0000256" key="4">
    <source>
        <dbReference type="SAM" id="MobiDB-lite"/>
    </source>
</evidence>
<evidence type="ECO:0000269" key="5">
    <source>
    </source>
</evidence>
<evidence type="ECO:0000269" key="6">
    <source>
    </source>
</evidence>
<evidence type="ECO:0000303" key="7">
    <source>
    </source>
</evidence>
<evidence type="ECO:0000305" key="8"/>
<accession>I1S9X9</accession>
<accession>A0A1C3YLP0</accession>
<reference key="1">
    <citation type="journal article" date="2007" name="Science">
        <title>The Fusarium graminearum genome reveals a link between localized polymorphism and pathogen specialization.</title>
        <authorList>
            <person name="Cuomo C.A."/>
            <person name="Gueldener U."/>
            <person name="Xu J.-R."/>
            <person name="Trail F."/>
            <person name="Turgeon B.G."/>
            <person name="Di Pietro A."/>
            <person name="Walton J.D."/>
            <person name="Ma L.-J."/>
            <person name="Baker S.E."/>
            <person name="Rep M."/>
            <person name="Adam G."/>
            <person name="Antoniw J."/>
            <person name="Baldwin T."/>
            <person name="Calvo S.E."/>
            <person name="Chang Y.-L."/>
            <person name="DeCaprio D."/>
            <person name="Gale L.R."/>
            <person name="Gnerre S."/>
            <person name="Goswami R.S."/>
            <person name="Hammond-Kosack K."/>
            <person name="Harris L.J."/>
            <person name="Hilburn K."/>
            <person name="Kennell J.C."/>
            <person name="Kroken S."/>
            <person name="Magnuson J.K."/>
            <person name="Mannhaupt G."/>
            <person name="Mauceli E.W."/>
            <person name="Mewes H.-W."/>
            <person name="Mitterbauer R."/>
            <person name="Muehlbauer G."/>
            <person name="Muensterkoetter M."/>
            <person name="Nelson D."/>
            <person name="O'Donnell K."/>
            <person name="Ouellet T."/>
            <person name="Qi W."/>
            <person name="Quesneville H."/>
            <person name="Roncero M.I.G."/>
            <person name="Seong K.-Y."/>
            <person name="Tetko I.V."/>
            <person name="Urban M."/>
            <person name="Waalwijk C."/>
            <person name="Ward T.J."/>
            <person name="Yao J."/>
            <person name="Birren B.W."/>
            <person name="Kistler H.C."/>
        </authorList>
    </citation>
    <scope>NUCLEOTIDE SEQUENCE [LARGE SCALE GENOMIC DNA]</scope>
    <source>
        <strain>ATCC MYA-4620 / CBS 123657 / FGSC 9075 / NRRL 31084 / PH-1</strain>
    </source>
</reference>
<reference key="2">
    <citation type="journal article" date="2010" name="Nature">
        <title>Comparative genomics reveals mobile pathogenicity chromosomes in Fusarium.</title>
        <authorList>
            <person name="Ma L.-J."/>
            <person name="van der Does H.C."/>
            <person name="Borkovich K.A."/>
            <person name="Coleman J.J."/>
            <person name="Daboussi M.-J."/>
            <person name="Di Pietro A."/>
            <person name="Dufresne M."/>
            <person name="Freitag M."/>
            <person name="Grabherr M."/>
            <person name="Henrissat B."/>
            <person name="Houterman P.M."/>
            <person name="Kang S."/>
            <person name="Shim W.-B."/>
            <person name="Woloshuk C."/>
            <person name="Xie X."/>
            <person name="Xu J.-R."/>
            <person name="Antoniw J."/>
            <person name="Baker S.E."/>
            <person name="Bluhm B.H."/>
            <person name="Breakspear A."/>
            <person name="Brown D.W."/>
            <person name="Butchko R.A.E."/>
            <person name="Chapman S."/>
            <person name="Coulson R."/>
            <person name="Coutinho P.M."/>
            <person name="Danchin E.G.J."/>
            <person name="Diener A."/>
            <person name="Gale L.R."/>
            <person name="Gardiner D.M."/>
            <person name="Goff S."/>
            <person name="Hammond-Kosack K.E."/>
            <person name="Hilburn K."/>
            <person name="Hua-Van A."/>
            <person name="Jonkers W."/>
            <person name="Kazan K."/>
            <person name="Kodira C.D."/>
            <person name="Koehrsen M."/>
            <person name="Kumar L."/>
            <person name="Lee Y.-H."/>
            <person name="Li L."/>
            <person name="Manners J.M."/>
            <person name="Miranda-Saavedra D."/>
            <person name="Mukherjee M."/>
            <person name="Park G."/>
            <person name="Park J."/>
            <person name="Park S.-Y."/>
            <person name="Proctor R.H."/>
            <person name="Regev A."/>
            <person name="Ruiz-Roldan M.C."/>
            <person name="Sain D."/>
            <person name="Sakthikumar S."/>
            <person name="Sykes S."/>
            <person name="Schwartz D.C."/>
            <person name="Turgeon B.G."/>
            <person name="Wapinski I."/>
            <person name="Yoder O."/>
            <person name="Young S."/>
            <person name="Zeng Q."/>
            <person name="Zhou S."/>
            <person name="Galagan J."/>
            <person name="Cuomo C.A."/>
            <person name="Kistler H.C."/>
            <person name="Rep M."/>
        </authorList>
    </citation>
    <scope>GENOME REANNOTATION</scope>
    <source>
        <strain>ATCC MYA-4620 / CBS 123657 / FGSC 9075 / NRRL 31084 / PH-1</strain>
    </source>
</reference>
<reference key="3">
    <citation type="journal article" date="2015" name="BMC Genomics">
        <title>The completed genome sequence of the pathogenic ascomycete fungus Fusarium graminearum.</title>
        <authorList>
            <person name="King R."/>
            <person name="Urban M."/>
            <person name="Hammond-Kosack M.C.U."/>
            <person name="Hassani-Pak K."/>
            <person name="Hammond-Kosack K.E."/>
        </authorList>
    </citation>
    <scope>NUCLEOTIDE SEQUENCE [LARGE SCALE GENOMIC DNA]</scope>
    <source>
        <strain>ATCC MYA-4620 / CBS 123657 / FGSC 9075 / NRRL 31084 / PH-1</strain>
    </source>
</reference>
<reference key="4">
    <citation type="journal article" date="2017" name="Sci. Rep.">
        <title>Genome-wide functional analysis reveals that autophagy is necessary for growth, sporulation, deoxynivalenol production and virulence in Fusarium graminearum.</title>
        <authorList>
            <person name="Lv W."/>
            <person name="Wang C."/>
            <person name="Yang N."/>
            <person name="Que Y."/>
            <person name="Talbot N.J."/>
            <person name="Wang Z."/>
        </authorList>
    </citation>
    <scope>IDENTIFICATION</scope>
    <scope>FUNCTION</scope>
    <scope>DISRUPTION PHENOTYPE</scope>
</reference>
<reference key="5">
    <citation type="journal article" date="2018" name="PLoS Genet.">
        <title>Small GTPase Rab7-mediated FgAtg9 trafficking is essential for autophagy-dependent development and pathogenicity in Fusarium graminearum.</title>
        <authorList>
            <person name="Zheng H."/>
            <person name="Miao P."/>
            <person name="Lin X."/>
            <person name="Li L."/>
            <person name="Wu C."/>
            <person name="Chen X."/>
            <person name="Abubakar Y.S."/>
            <person name="Norvienyeku J."/>
            <person name="Li G."/>
            <person name="Zhou J."/>
            <person name="Wang Z."/>
            <person name="Zheng W."/>
        </authorList>
    </citation>
    <scope>FUNCTION</scope>
    <scope>SUBCELLULAR LOCATION</scope>
    <scope>DISRUPTION PHENOTYPE</scope>
</reference>
<organism>
    <name type="scientific">Gibberella zeae (strain ATCC MYA-4620 / CBS 123657 / FGSC 9075 / NRRL 31084 / PH-1)</name>
    <name type="common">Wheat head blight fungus</name>
    <name type="synonym">Fusarium graminearum</name>
    <dbReference type="NCBI Taxonomy" id="229533"/>
    <lineage>
        <taxon>Eukaryota</taxon>
        <taxon>Fungi</taxon>
        <taxon>Dikarya</taxon>
        <taxon>Ascomycota</taxon>
        <taxon>Pezizomycotina</taxon>
        <taxon>Sordariomycetes</taxon>
        <taxon>Hypocreomycetidae</taxon>
        <taxon>Hypocreales</taxon>
        <taxon>Nectriaceae</taxon>
        <taxon>Fusarium</taxon>
    </lineage>
</organism>
<proteinExistence type="inferred from homology"/>
<comment type="function">
    <text evidence="2 5 6">Phospholipid scramblase involved in autophagy and cytoplasm to vacuole transport (Cvt) vesicle formation. Cycles between the preautophagosomal structure/phagophore assembly site (PAS) and the cytoplasmic vesicle pool and supplies membrane for the growing autophagosome. Lipid scramblase activity plays a key role in preautophagosomal structure/phagophore assembly by distributing the phospholipids that arrive through ATG2 from the cytoplasmic to the luminal leaflet of the bilayer, thereby driving autophagosomal membrane expansion. Required for mitophagy. Also involved in endoplasmic reticulum-specific autophagic process and is essential for the survival of cells subjected to severe ER stress. Different machineries are required for anterograde trafficking to the PAS during either the Cvt pathway or bulk autophagy and for retrograde trafficking (By similarity). Autophagy is required for proper vegetative growth, asexual/sexual reproduction, and full virulence (PubMed:28894236, PubMed:30044782). Autophagy is particularly involved in the biosynthesis of deoxynivalenol (DON), an important virulence determinant (PubMed:28894236). Required for aerial hyphae development and lipid droplet degradation in response to starvation (PubMed:30044782).</text>
</comment>
<comment type="catalytic activity">
    <reaction evidence="2">
        <text>a 1,2-diacyl-sn-glycero-3-phosphocholine(in) = a 1,2-diacyl-sn-glycero-3-phosphocholine(out)</text>
        <dbReference type="Rhea" id="RHEA:38571"/>
        <dbReference type="ChEBI" id="CHEBI:57643"/>
    </reaction>
</comment>
<comment type="catalytic activity">
    <reaction evidence="2">
        <text>a 1,2-diacyl-sn-glycero-3-phospho-L-serine(in) = a 1,2-diacyl-sn-glycero-3-phospho-L-serine(out)</text>
        <dbReference type="Rhea" id="RHEA:38663"/>
        <dbReference type="ChEBI" id="CHEBI:57262"/>
    </reaction>
</comment>
<comment type="catalytic activity">
    <reaction evidence="2">
        <text>a 1,2-diacyl-sn-glycero-3-phosphoethanolamine(in) = a 1,2-diacyl-sn-glycero-3-phosphoethanolamine(out)</text>
        <dbReference type="Rhea" id="RHEA:38895"/>
        <dbReference type="ChEBI" id="CHEBI:64612"/>
    </reaction>
</comment>
<comment type="catalytic activity">
    <reaction evidence="2">
        <text>a 1,2-diacyl-sn-glycero-3-phospho-(1D-myo-inositol-3-phosphate)(in) = a 1,2-diacyl-sn-glycero-3-phospho-(1D-myo-inositol-3-phosphate)(out)</text>
        <dbReference type="Rhea" id="RHEA:67920"/>
        <dbReference type="ChEBI" id="CHEBI:58088"/>
    </reaction>
</comment>
<comment type="subunit">
    <text evidence="1">Homotrimer; forms a homotrimer with a central pore that forms a path between the two membrane leaflets.</text>
</comment>
<comment type="subcellular location">
    <subcellularLocation>
        <location evidence="2">Preautophagosomal structure membrane</location>
        <topology evidence="2">Multi-pass membrane protein</topology>
    </subcellularLocation>
    <subcellularLocation>
        <location evidence="2">Cytoplasmic vesicle membrane</location>
        <topology evidence="2">Multi-pass membrane protein</topology>
    </subcellularLocation>
    <subcellularLocation>
        <location evidence="2">Golgi apparatus membrane</location>
        <topology evidence="2">Multi-pass membrane protein</topology>
    </subcellularLocation>
    <subcellularLocation>
        <location evidence="2">Endoplasmic reticulum membrane</location>
        <topology evidence="2">Multi-pass membrane protein</topology>
    </subcellularLocation>
</comment>
<comment type="domain">
    <text evidence="1">Forms a homotrimer with a solvated central pore, which is connected laterally to the cytosol through the cavity within each protomer. Acts as a lipid scramblase that uses its central pore to function: the central pore opens laterally to accommodate lipid headgroups, thereby enabling lipid flipping and redistribution of lipids added to the outer leaflet of ATG9-containing vesicles, thereby enabling growth into autophagosomes.</text>
</comment>
<comment type="PTM">
    <text evidence="2">Phosphorylated by ATG1 (By similarity). ATG1 phosphorylation is required for ATG18 interaction and preautophagosome elongation (By similarity).</text>
</comment>
<comment type="disruption phenotype">
    <text evidence="5 6">Significantly decreases the radial growth of colonies under nutrient-rich conditions (PubMed:28894236). Strongly reduces conidiation (PubMed:28894236). Blocks autophagy (PubMed:30044782).</text>
</comment>
<comment type="similarity">
    <text evidence="8">Belongs to the ATG9 family.</text>
</comment>
<comment type="sequence caution" evidence="8">
    <conflict type="erroneous gene model prediction">
        <sequence resource="EMBL-CDS" id="SCB65354"/>
    </conflict>
</comment>
<keyword id="KW-0072">Autophagy</keyword>
<keyword id="KW-0968">Cytoplasmic vesicle</keyword>
<keyword id="KW-0256">Endoplasmic reticulum</keyword>
<keyword id="KW-0333">Golgi apparatus</keyword>
<keyword id="KW-0445">Lipid transport</keyword>
<keyword id="KW-0472">Membrane</keyword>
<keyword id="KW-1185">Reference proteome</keyword>
<keyword id="KW-0812">Transmembrane</keyword>
<keyword id="KW-1133">Transmembrane helix</keyword>
<keyword id="KW-0813">Transport</keyword>
<feature type="chain" id="PRO_0000443897" description="Autophagy-related protein 9">
    <location>
        <begin position="1"/>
        <end position="888"/>
    </location>
</feature>
<feature type="topological domain" description="Cytoplasmic" evidence="8">
    <location>
        <begin position="1"/>
        <end position="255"/>
    </location>
</feature>
<feature type="transmembrane region" description="Helical" evidence="3">
    <location>
        <begin position="256"/>
        <end position="276"/>
    </location>
</feature>
<feature type="topological domain" description="Lumenal" evidence="8">
    <location>
        <begin position="277"/>
        <end position="422"/>
    </location>
</feature>
<feature type="transmembrane region" description="Helical" evidence="3">
    <location>
        <begin position="423"/>
        <end position="443"/>
    </location>
</feature>
<feature type="topological domain" description="Cytoplasmic" evidence="8">
    <location>
        <begin position="444"/>
        <end position="511"/>
    </location>
</feature>
<feature type="intramembrane region" evidence="1">
    <location>
        <begin position="512"/>
        <end position="532"/>
    </location>
</feature>
<feature type="topological domain" description="Cytoplasmic" evidence="8">
    <location>
        <begin position="533"/>
        <end position="544"/>
    </location>
</feature>
<feature type="transmembrane region" description="Helical" evidence="3">
    <location>
        <begin position="545"/>
        <end position="565"/>
    </location>
</feature>
<feature type="topological domain" description="Lumenal" evidence="8">
    <location>
        <begin position="566"/>
        <end position="611"/>
    </location>
</feature>
<feature type="transmembrane region" description="Helical" evidence="3">
    <location>
        <begin position="612"/>
        <end position="632"/>
    </location>
</feature>
<feature type="topological domain" description="Cytoplasmic" evidence="8">
    <location>
        <begin position="633"/>
        <end position="642"/>
    </location>
</feature>
<feature type="intramembrane region" evidence="1">
    <location>
        <begin position="643"/>
        <end position="663"/>
    </location>
</feature>
<feature type="topological domain" description="Cytoplasmic" evidence="8">
    <location>
        <begin position="664"/>
        <end position="888"/>
    </location>
</feature>
<feature type="region of interest" description="Disordered" evidence="4">
    <location>
        <begin position="1"/>
        <end position="170"/>
    </location>
</feature>
<feature type="region of interest" description="Disordered" evidence="4">
    <location>
        <begin position="748"/>
        <end position="770"/>
    </location>
</feature>
<feature type="region of interest" description="Disordered" evidence="4">
    <location>
        <begin position="834"/>
        <end position="866"/>
    </location>
</feature>
<feature type="compositionally biased region" description="Polar residues" evidence="4">
    <location>
        <begin position="13"/>
        <end position="24"/>
    </location>
</feature>
<feature type="compositionally biased region" description="Acidic residues" evidence="4">
    <location>
        <begin position="28"/>
        <end position="38"/>
    </location>
</feature>
<feature type="compositionally biased region" description="Polar residues" evidence="4">
    <location>
        <begin position="123"/>
        <end position="143"/>
    </location>
</feature>
<gene>
    <name evidence="7" type="primary">ATG9</name>
    <name type="ORF">FGRAMPH1_01T26133</name>
</gene>
<name>ATG9_GIBZE</name>